<dbReference type="EC" id="2.7.4.-" evidence="2 4"/>
<dbReference type="EMBL" id="AF177145">
    <property type="protein sequence ID" value="AAF15057.1"/>
    <property type="molecule type" value="mRNA"/>
</dbReference>
<dbReference type="EMBL" id="AY007091">
    <property type="protein sequence ID" value="AAG01984.1"/>
    <property type="molecule type" value="mRNA"/>
</dbReference>
<dbReference type="EMBL" id="AK290526">
    <property type="protein sequence ID" value="BAF83215.1"/>
    <property type="molecule type" value="mRNA"/>
</dbReference>
<dbReference type="EMBL" id="AK304714">
    <property type="protein sequence ID" value="BAG65478.1"/>
    <property type="molecule type" value="mRNA"/>
</dbReference>
<dbReference type="EMBL" id="AC141002">
    <property type="status" value="NOT_ANNOTATED_CDS"/>
    <property type="molecule type" value="Genomic_DNA"/>
</dbReference>
<dbReference type="EMBL" id="BC001864">
    <property type="status" value="NOT_ANNOTATED_CDS"/>
    <property type="molecule type" value="mRNA"/>
</dbReference>
<dbReference type="EMBL" id="BC004469">
    <property type="protein sequence ID" value="AAH04469.2"/>
    <property type="molecule type" value="mRNA"/>
</dbReference>
<dbReference type="EMBL" id="BC019694">
    <property type="protein sequence ID" value="AAH19694.1"/>
    <property type="molecule type" value="mRNA"/>
</dbReference>
<dbReference type="EMBL" id="BC065533">
    <property type="protein sequence ID" value="AAH65533.1"/>
    <property type="molecule type" value="mRNA"/>
</dbReference>
<dbReference type="EMBL" id="CA488567">
    <property type="status" value="NOT_ANNOTATED_CDS"/>
    <property type="molecule type" value="mRNA"/>
</dbReference>
<dbReference type="EMBL" id="AL117458">
    <property type="protein sequence ID" value="CAB55936.1"/>
    <property type="molecule type" value="mRNA"/>
</dbReference>
<dbReference type="EMBL" id="AL137514">
    <property type="protein sequence ID" value="CAB70780.1"/>
    <property type="molecule type" value="mRNA"/>
</dbReference>
<dbReference type="CCDS" id="CCDS2777.1">
    <molecule id="Q9UHH9-1"/>
</dbReference>
<dbReference type="CCDS" id="CCDS33752.1">
    <molecule id="Q9UHH9-2"/>
</dbReference>
<dbReference type="CCDS" id="CCDS54579.1">
    <molecule id="Q9UHH9-6"/>
</dbReference>
<dbReference type="CCDS" id="CCDS54580.1">
    <molecule id="Q9UHH9-4"/>
</dbReference>
<dbReference type="CCDS" id="CCDS54581.1">
    <molecule id="Q9UHH9-5"/>
</dbReference>
<dbReference type="PIR" id="T17246">
    <property type="entry name" value="T17246"/>
</dbReference>
<dbReference type="PIR" id="T46275">
    <property type="entry name" value="T46275"/>
</dbReference>
<dbReference type="RefSeq" id="NP_001005909.1">
    <molecule id="Q9UHH9-1"/>
    <property type="nucleotide sequence ID" value="NM_001005909.3"/>
</dbReference>
<dbReference type="RefSeq" id="NP_001005910.1">
    <molecule id="Q9UHH9-2"/>
    <property type="nucleotide sequence ID" value="NM_001005910.3"/>
</dbReference>
<dbReference type="RefSeq" id="NP_001005911.1">
    <molecule id="Q9UHH9-2"/>
    <property type="nucleotide sequence ID" value="NM_001005911.3"/>
</dbReference>
<dbReference type="RefSeq" id="NP_001139650.1">
    <molecule id="Q9UHH9-6"/>
    <property type="nucleotide sequence ID" value="NM_001146178.3"/>
</dbReference>
<dbReference type="RefSeq" id="NP_001139651.1">
    <molecule id="Q9UHH9-6"/>
    <property type="nucleotide sequence ID" value="NM_001146179.3"/>
</dbReference>
<dbReference type="RefSeq" id="NP_001177245.1">
    <molecule id="Q9UHH9-4"/>
    <property type="nucleotide sequence ID" value="NM_001190316.2"/>
</dbReference>
<dbReference type="RefSeq" id="NP_001177246.1">
    <molecule id="Q9UHH9-5"/>
    <property type="nucleotide sequence ID" value="NM_001190317.2"/>
</dbReference>
<dbReference type="RefSeq" id="NP_057375.2">
    <molecule id="Q9UHH9-1"/>
    <property type="nucleotide sequence ID" value="NM_016291.4"/>
</dbReference>
<dbReference type="RefSeq" id="XP_011532124.1">
    <property type="nucleotide sequence ID" value="XM_011533822.1"/>
</dbReference>
<dbReference type="RefSeq" id="XP_011532125.1">
    <property type="nucleotide sequence ID" value="XM_011533823.1"/>
</dbReference>
<dbReference type="RefSeq" id="XP_016862072.1">
    <property type="nucleotide sequence ID" value="XM_017006583.1"/>
</dbReference>
<dbReference type="RefSeq" id="XP_016862073.1">
    <property type="nucleotide sequence ID" value="XM_017006584.1"/>
</dbReference>
<dbReference type="RefSeq" id="XP_016862074.1">
    <property type="nucleotide sequence ID" value="XM_017006585.1"/>
</dbReference>
<dbReference type="RefSeq" id="XP_024309336.1">
    <molecule id="Q9UHH9-1"/>
    <property type="nucleotide sequence ID" value="XM_024453568.2"/>
</dbReference>
<dbReference type="RefSeq" id="XP_024309339.1">
    <molecule id="Q9UHH9-1"/>
    <property type="nucleotide sequence ID" value="XM_024453571.2"/>
</dbReference>
<dbReference type="RefSeq" id="XP_054202781.1">
    <molecule id="Q9UHH9-1"/>
    <property type="nucleotide sequence ID" value="XM_054346806.1"/>
</dbReference>
<dbReference type="RefSeq" id="XP_054202782.1">
    <molecule id="Q9UHH9-1"/>
    <property type="nucleotide sequence ID" value="XM_054346807.1"/>
</dbReference>
<dbReference type="BioGRID" id="119546">
    <property type="interactions" value="26"/>
</dbReference>
<dbReference type="DIP" id="DIP-29676N"/>
<dbReference type="FunCoup" id="Q9UHH9">
    <property type="interactions" value="3385"/>
</dbReference>
<dbReference type="IntAct" id="Q9UHH9">
    <property type="interactions" value="13"/>
</dbReference>
<dbReference type="MINT" id="Q9UHH9"/>
<dbReference type="STRING" id="9606.ENSP00000331103"/>
<dbReference type="BindingDB" id="Q9UHH9"/>
<dbReference type="ChEMBL" id="CHEMBL4523488"/>
<dbReference type="DrugCentral" id="Q9UHH9"/>
<dbReference type="GlyGen" id="Q9UHH9">
    <property type="glycosylation" value="1 site, 1 O-linked glycan (1 site)"/>
</dbReference>
<dbReference type="iPTMnet" id="Q9UHH9"/>
<dbReference type="PhosphoSitePlus" id="Q9UHH9"/>
<dbReference type="BioMuta" id="IP6K2"/>
<dbReference type="DMDM" id="50400688"/>
<dbReference type="jPOST" id="Q9UHH9"/>
<dbReference type="MassIVE" id="Q9UHH9"/>
<dbReference type="PaxDb" id="9606-ENSP00000331103"/>
<dbReference type="PeptideAtlas" id="Q9UHH9"/>
<dbReference type="ProteomicsDB" id="34267"/>
<dbReference type="ProteomicsDB" id="84351">
    <molecule id="Q9UHH9-1"/>
</dbReference>
<dbReference type="ProteomicsDB" id="84352">
    <molecule id="Q9UHH9-2"/>
</dbReference>
<dbReference type="ProteomicsDB" id="84353">
    <molecule id="Q9UHH9-3"/>
</dbReference>
<dbReference type="ProteomicsDB" id="84354">
    <molecule id="Q9UHH9-4"/>
</dbReference>
<dbReference type="ProteomicsDB" id="84355">
    <molecule id="Q9UHH9-5"/>
</dbReference>
<dbReference type="Pumba" id="Q9UHH9"/>
<dbReference type="Antibodypedia" id="1556">
    <property type="antibodies" value="217 antibodies from 31 providers"/>
</dbReference>
<dbReference type="DNASU" id="51447"/>
<dbReference type="Ensembl" id="ENST00000328631.10">
    <molecule id="Q9UHH9-1"/>
    <property type="protein sequence ID" value="ENSP00000331103.5"/>
    <property type="gene ID" value="ENSG00000068745.15"/>
</dbReference>
<dbReference type="Ensembl" id="ENST00000340879.8">
    <molecule id="Q9UHH9-2"/>
    <property type="protein sequence ID" value="ENSP00000341925.4"/>
    <property type="gene ID" value="ENSG00000068745.15"/>
</dbReference>
<dbReference type="Ensembl" id="ENST00000413298.5">
    <molecule id="Q9UHH9-2"/>
    <property type="protein sequence ID" value="ENSP00000396203.1"/>
    <property type="gene ID" value="ENSG00000068745.15"/>
</dbReference>
<dbReference type="Ensembl" id="ENST00000416707.1">
    <molecule id="Q9UHH9-3"/>
    <property type="protein sequence ID" value="ENSP00000387759.1"/>
    <property type="gene ID" value="ENSG00000068745.15"/>
</dbReference>
<dbReference type="Ensembl" id="ENST00000431721.6">
    <molecule id="Q9UHH9-4"/>
    <property type="protein sequence ID" value="ENSP00000414139.2"/>
    <property type="gene ID" value="ENSG00000068745.15"/>
</dbReference>
<dbReference type="Ensembl" id="ENST00000432678.6">
    <molecule id="Q9UHH9-6"/>
    <property type="protein sequence ID" value="ENSP00000400812.2"/>
    <property type="gene ID" value="ENSG00000068745.15"/>
</dbReference>
<dbReference type="Ensembl" id="ENST00000446860.5">
    <molecule id="Q9UHH9-5"/>
    <property type="protein sequence ID" value="ENSP00000399052.1"/>
    <property type="gene ID" value="ENSG00000068745.15"/>
</dbReference>
<dbReference type="GeneID" id="51447"/>
<dbReference type="KEGG" id="hsa:51447"/>
<dbReference type="MANE-Select" id="ENST00000328631.10">
    <property type="protein sequence ID" value="ENSP00000331103.5"/>
    <property type="RefSeq nucleotide sequence ID" value="NM_016291.4"/>
    <property type="RefSeq protein sequence ID" value="NP_057375.2"/>
</dbReference>
<dbReference type="UCSC" id="uc003cuq.4">
    <molecule id="Q9UHH9-1"/>
    <property type="organism name" value="human"/>
</dbReference>
<dbReference type="AGR" id="HGNC:17313"/>
<dbReference type="CTD" id="51447"/>
<dbReference type="DisGeNET" id="51447"/>
<dbReference type="GeneCards" id="IP6K2"/>
<dbReference type="HGNC" id="HGNC:17313">
    <property type="gene designation" value="IP6K2"/>
</dbReference>
<dbReference type="HPA" id="ENSG00000068745">
    <property type="expression patterns" value="Low tissue specificity"/>
</dbReference>
<dbReference type="MIM" id="606992">
    <property type="type" value="gene"/>
</dbReference>
<dbReference type="neXtProt" id="NX_Q9UHH9"/>
<dbReference type="OpenTargets" id="ENSG00000068745"/>
<dbReference type="PharmGKB" id="PA164720999"/>
<dbReference type="VEuPathDB" id="HostDB:ENSG00000068745"/>
<dbReference type="eggNOG" id="KOG1620">
    <property type="taxonomic scope" value="Eukaryota"/>
</dbReference>
<dbReference type="GeneTree" id="ENSGT00940000156310"/>
<dbReference type="HOGENOM" id="CLU_014862_0_0_1"/>
<dbReference type="InParanoid" id="Q9UHH9"/>
<dbReference type="OMA" id="WANKKTH"/>
<dbReference type="OrthoDB" id="2573163at2759"/>
<dbReference type="PAN-GO" id="Q9UHH9">
    <property type="GO annotations" value="5 GO annotations based on evolutionary models"/>
</dbReference>
<dbReference type="PhylomeDB" id="Q9UHH9"/>
<dbReference type="TreeFam" id="TF314066"/>
<dbReference type="BioCyc" id="MetaCyc:HS00942-MONOMER"/>
<dbReference type="BRENDA" id="2.7.4.21">
    <property type="organism ID" value="2681"/>
</dbReference>
<dbReference type="PathwayCommons" id="Q9UHH9"/>
<dbReference type="Reactome" id="R-HSA-1855191">
    <property type="pathway name" value="Synthesis of IPs in the nucleus"/>
</dbReference>
<dbReference type="Reactome" id="R-HSA-909733">
    <property type="pathway name" value="Interferon alpha/beta signaling"/>
</dbReference>
<dbReference type="SABIO-RK" id="Q9UHH9"/>
<dbReference type="SignaLink" id="Q9UHH9"/>
<dbReference type="SIGNOR" id="Q9UHH9"/>
<dbReference type="UniPathway" id="UPA00949"/>
<dbReference type="BioGRID-ORCS" id="51447">
    <property type="hits" value="8 hits in 1158 CRISPR screens"/>
</dbReference>
<dbReference type="ChiTaRS" id="IP6K2">
    <property type="organism name" value="human"/>
</dbReference>
<dbReference type="GeneWiki" id="IHPK2"/>
<dbReference type="GenomeRNAi" id="51447"/>
<dbReference type="Pharos" id="Q9UHH9">
    <property type="development level" value="Tbio"/>
</dbReference>
<dbReference type="PRO" id="PR:Q9UHH9"/>
<dbReference type="Proteomes" id="UP000005640">
    <property type="component" value="Chromosome 3"/>
</dbReference>
<dbReference type="RNAct" id="Q9UHH9">
    <property type="molecule type" value="protein"/>
</dbReference>
<dbReference type="Bgee" id="ENSG00000068745">
    <property type="expression patterns" value="Expressed in right hemisphere of cerebellum and 189 other cell types or tissues"/>
</dbReference>
<dbReference type="ExpressionAtlas" id="Q9UHH9">
    <property type="expression patterns" value="baseline and differential"/>
</dbReference>
<dbReference type="GO" id="GO:0030054">
    <property type="term" value="C:cell junction"/>
    <property type="evidence" value="ECO:0000314"/>
    <property type="project" value="HPA"/>
</dbReference>
<dbReference type="GO" id="GO:0005737">
    <property type="term" value="C:cytoplasm"/>
    <property type="evidence" value="ECO:0000318"/>
    <property type="project" value="GO_Central"/>
</dbReference>
<dbReference type="GO" id="GO:0001650">
    <property type="term" value="C:fibrillar center"/>
    <property type="evidence" value="ECO:0000314"/>
    <property type="project" value="HPA"/>
</dbReference>
<dbReference type="GO" id="GO:0005654">
    <property type="term" value="C:nucleoplasm"/>
    <property type="evidence" value="ECO:0000314"/>
    <property type="project" value="HPA"/>
</dbReference>
<dbReference type="GO" id="GO:0005634">
    <property type="term" value="C:nucleus"/>
    <property type="evidence" value="ECO:0000314"/>
    <property type="project" value="UniProtKB"/>
</dbReference>
<dbReference type="GO" id="GO:0005524">
    <property type="term" value="F:ATP binding"/>
    <property type="evidence" value="ECO:0007669"/>
    <property type="project" value="UniProtKB-KW"/>
</dbReference>
<dbReference type="GO" id="GO:0000829">
    <property type="term" value="F:diphosphoinositol pentakisphosphate kinase activity"/>
    <property type="evidence" value="ECO:0000304"/>
    <property type="project" value="Reactome"/>
</dbReference>
<dbReference type="GO" id="GO:0052839">
    <property type="term" value="F:diphosphoinositol tetrakisphosphate kinase activity"/>
    <property type="evidence" value="ECO:0000304"/>
    <property type="project" value="Reactome"/>
</dbReference>
<dbReference type="GO" id="GO:0097243">
    <property type="term" value="F:flavonoid binding"/>
    <property type="evidence" value="ECO:0000314"/>
    <property type="project" value="UniProtKB"/>
</dbReference>
<dbReference type="GO" id="GO:0052836">
    <property type="term" value="F:inositol 5-diphosphate pentakisphosphate 5-kinase activity"/>
    <property type="evidence" value="ECO:0000304"/>
    <property type="project" value="Reactome"/>
</dbReference>
<dbReference type="GO" id="GO:0000832">
    <property type="term" value="F:inositol hexakisphosphate 5-kinase activity"/>
    <property type="evidence" value="ECO:0000314"/>
    <property type="project" value="UniProtKB"/>
</dbReference>
<dbReference type="GO" id="GO:0000828">
    <property type="term" value="F:inositol hexakisphosphate kinase activity"/>
    <property type="evidence" value="ECO:0000314"/>
    <property type="project" value="UniProtKB"/>
</dbReference>
<dbReference type="GO" id="GO:0000827">
    <property type="term" value="F:inositol-1,3,4,5,6-pentakisphosphate kinase activity"/>
    <property type="evidence" value="ECO:0000304"/>
    <property type="project" value="Reactome"/>
</dbReference>
<dbReference type="GO" id="GO:1905396">
    <property type="term" value="P:cellular response to flavonoid"/>
    <property type="evidence" value="ECO:0000315"/>
    <property type="project" value="UniProtKB"/>
</dbReference>
<dbReference type="GO" id="GO:0032958">
    <property type="term" value="P:inositol phosphate biosynthetic process"/>
    <property type="evidence" value="ECO:0000318"/>
    <property type="project" value="GO_Central"/>
</dbReference>
<dbReference type="GO" id="GO:0043647">
    <property type="term" value="P:inositol phosphate metabolic process"/>
    <property type="evidence" value="ECO:0000314"/>
    <property type="project" value="UniProtKB"/>
</dbReference>
<dbReference type="GO" id="GO:0030308">
    <property type="term" value="P:negative regulation of cell growth"/>
    <property type="evidence" value="ECO:0000315"/>
    <property type="project" value="UniProtKB"/>
</dbReference>
<dbReference type="GO" id="GO:0046854">
    <property type="term" value="P:phosphatidylinositol phosphate biosynthetic process"/>
    <property type="evidence" value="ECO:0000314"/>
    <property type="project" value="UniProtKB"/>
</dbReference>
<dbReference type="GO" id="GO:0043065">
    <property type="term" value="P:positive regulation of apoptotic process"/>
    <property type="evidence" value="ECO:0000315"/>
    <property type="project" value="UniProtKB"/>
</dbReference>
<dbReference type="GO" id="GO:0050821">
    <property type="term" value="P:protein stabilization"/>
    <property type="evidence" value="ECO:0007669"/>
    <property type="project" value="Ensembl"/>
</dbReference>
<dbReference type="FunFam" id="3.30.470.160:FF:000002">
    <property type="entry name" value="Kinase"/>
    <property type="match status" value="1"/>
</dbReference>
<dbReference type="Gene3D" id="3.30.470.160">
    <property type="entry name" value="Inositol polyphosphate kinase"/>
    <property type="match status" value="1"/>
</dbReference>
<dbReference type="InterPro" id="IPR005522">
    <property type="entry name" value="IPK"/>
</dbReference>
<dbReference type="InterPro" id="IPR038286">
    <property type="entry name" value="IPK_sf"/>
</dbReference>
<dbReference type="PANTHER" id="PTHR12400:SF47">
    <property type="entry name" value="INOSITOL HEXAKISPHOSPHATE KINASE 2"/>
    <property type="match status" value="1"/>
</dbReference>
<dbReference type="PANTHER" id="PTHR12400">
    <property type="entry name" value="INOSITOL POLYPHOSPHATE KINASE"/>
    <property type="match status" value="1"/>
</dbReference>
<dbReference type="Pfam" id="PF03770">
    <property type="entry name" value="IPK"/>
    <property type="match status" value="1"/>
</dbReference>
<dbReference type="SUPFAM" id="SSF56104">
    <property type="entry name" value="SAICAR synthase-like"/>
    <property type="match status" value="1"/>
</dbReference>
<gene>
    <name evidence="10" type="primary">IP6K2</name>
    <name type="synonym">IHPK2</name>
    <name type="ORF">TCCCIA00113</name>
</gene>
<reference key="1">
    <citation type="journal article" date="1999" name="Curr. Biol.">
        <title>Synthesis of diphosphoinositol pentakisphosphate by a newly identified family of higher inositol polyphosphate kinases.</title>
        <authorList>
            <person name="Saiardi A."/>
            <person name="Erdjument-Bromage H."/>
            <person name="Snowman A.M."/>
            <person name="Tempst P."/>
            <person name="Snyder S.H."/>
        </authorList>
    </citation>
    <scope>NUCLEOTIDE SEQUENCE [MRNA] (ISOFORM 1)</scope>
    <scope>FUNCTION</scope>
    <scope>CATALYTIC ACTIVITY</scope>
    <scope>BIOPHYSICOCHEMICAL PROPERTIES</scope>
</reference>
<reference key="2">
    <citation type="submission" date="2000-07" db="EMBL/GenBank/DDBJ databases">
        <title>Pediatric leukemia cDNA sequencing project.</title>
        <authorList>
            <person name="Zhou J."/>
            <person name="Yu W."/>
            <person name="Tang H."/>
            <person name="Mei G."/>
            <person name="Tsang Y.T.M."/>
            <person name="Bouck J."/>
            <person name="Gibbs R.A."/>
            <person name="Margolin J.F."/>
        </authorList>
    </citation>
    <scope>NUCLEOTIDE SEQUENCE [LARGE SCALE MRNA] (ISOFORM 1)</scope>
    <source>
        <tissue>Leukemia</tissue>
    </source>
</reference>
<reference key="3">
    <citation type="journal article" date="2004" name="Nat. Genet.">
        <title>Complete sequencing and characterization of 21,243 full-length human cDNAs.</title>
        <authorList>
            <person name="Ota T."/>
            <person name="Suzuki Y."/>
            <person name="Nishikawa T."/>
            <person name="Otsuki T."/>
            <person name="Sugiyama T."/>
            <person name="Irie R."/>
            <person name="Wakamatsu A."/>
            <person name="Hayashi K."/>
            <person name="Sato H."/>
            <person name="Nagai K."/>
            <person name="Kimura K."/>
            <person name="Makita H."/>
            <person name="Sekine M."/>
            <person name="Obayashi M."/>
            <person name="Nishi T."/>
            <person name="Shibahara T."/>
            <person name="Tanaka T."/>
            <person name="Ishii S."/>
            <person name="Yamamoto J."/>
            <person name="Saito K."/>
            <person name="Kawai Y."/>
            <person name="Isono Y."/>
            <person name="Nakamura Y."/>
            <person name="Nagahari K."/>
            <person name="Murakami K."/>
            <person name="Yasuda T."/>
            <person name="Iwayanagi T."/>
            <person name="Wagatsuma M."/>
            <person name="Shiratori A."/>
            <person name="Sudo H."/>
            <person name="Hosoiri T."/>
            <person name="Kaku Y."/>
            <person name="Kodaira H."/>
            <person name="Kondo H."/>
            <person name="Sugawara M."/>
            <person name="Takahashi M."/>
            <person name="Kanda K."/>
            <person name="Yokoi T."/>
            <person name="Furuya T."/>
            <person name="Kikkawa E."/>
            <person name="Omura Y."/>
            <person name="Abe K."/>
            <person name="Kamihara K."/>
            <person name="Katsuta N."/>
            <person name="Sato K."/>
            <person name="Tanikawa M."/>
            <person name="Yamazaki M."/>
            <person name="Ninomiya K."/>
            <person name="Ishibashi T."/>
            <person name="Yamashita H."/>
            <person name="Murakawa K."/>
            <person name="Fujimori K."/>
            <person name="Tanai H."/>
            <person name="Kimata M."/>
            <person name="Watanabe M."/>
            <person name="Hiraoka S."/>
            <person name="Chiba Y."/>
            <person name="Ishida S."/>
            <person name="Ono Y."/>
            <person name="Takiguchi S."/>
            <person name="Watanabe S."/>
            <person name="Yosida M."/>
            <person name="Hotuta T."/>
            <person name="Kusano J."/>
            <person name="Kanehori K."/>
            <person name="Takahashi-Fujii A."/>
            <person name="Hara H."/>
            <person name="Tanase T.-O."/>
            <person name="Nomura Y."/>
            <person name="Togiya S."/>
            <person name="Komai F."/>
            <person name="Hara R."/>
            <person name="Takeuchi K."/>
            <person name="Arita M."/>
            <person name="Imose N."/>
            <person name="Musashino K."/>
            <person name="Yuuki H."/>
            <person name="Oshima A."/>
            <person name="Sasaki N."/>
            <person name="Aotsuka S."/>
            <person name="Yoshikawa Y."/>
            <person name="Matsunawa H."/>
            <person name="Ichihara T."/>
            <person name="Shiohata N."/>
            <person name="Sano S."/>
            <person name="Moriya S."/>
            <person name="Momiyama H."/>
            <person name="Satoh N."/>
            <person name="Takami S."/>
            <person name="Terashima Y."/>
            <person name="Suzuki O."/>
            <person name="Nakagawa S."/>
            <person name="Senoh A."/>
            <person name="Mizoguchi H."/>
            <person name="Goto Y."/>
            <person name="Shimizu F."/>
            <person name="Wakebe H."/>
            <person name="Hishigaki H."/>
            <person name="Watanabe T."/>
            <person name="Sugiyama A."/>
            <person name="Takemoto M."/>
            <person name="Kawakami B."/>
            <person name="Yamazaki M."/>
            <person name="Watanabe K."/>
            <person name="Kumagai A."/>
            <person name="Itakura S."/>
            <person name="Fukuzumi Y."/>
            <person name="Fujimori Y."/>
            <person name="Komiyama M."/>
            <person name="Tashiro H."/>
            <person name="Tanigami A."/>
            <person name="Fujiwara T."/>
            <person name="Ono T."/>
            <person name="Yamada K."/>
            <person name="Fujii Y."/>
            <person name="Ozaki K."/>
            <person name="Hirao M."/>
            <person name="Ohmori Y."/>
            <person name="Kawabata A."/>
            <person name="Hikiji T."/>
            <person name="Kobatake N."/>
            <person name="Inagaki H."/>
            <person name="Ikema Y."/>
            <person name="Okamoto S."/>
            <person name="Okitani R."/>
            <person name="Kawakami T."/>
            <person name="Noguchi S."/>
            <person name="Itoh T."/>
            <person name="Shigeta K."/>
            <person name="Senba T."/>
            <person name="Matsumura K."/>
            <person name="Nakajima Y."/>
            <person name="Mizuno T."/>
            <person name="Morinaga M."/>
            <person name="Sasaki M."/>
            <person name="Togashi T."/>
            <person name="Oyama M."/>
            <person name="Hata H."/>
            <person name="Watanabe M."/>
            <person name="Komatsu T."/>
            <person name="Mizushima-Sugano J."/>
            <person name="Satoh T."/>
            <person name="Shirai Y."/>
            <person name="Takahashi Y."/>
            <person name="Nakagawa K."/>
            <person name="Okumura K."/>
            <person name="Nagase T."/>
            <person name="Nomura N."/>
            <person name="Kikuchi H."/>
            <person name="Masuho Y."/>
            <person name="Yamashita R."/>
            <person name="Nakai K."/>
            <person name="Yada T."/>
            <person name="Nakamura Y."/>
            <person name="Ohara O."/>
            <person name="Isogai T."/>
            <person name="Sugano S."/>
        </authorList>
    </citation>
    <scope>NUCLEOTIDE SEQUENCE [LARGE SCALE MRNA] (ISOFORMS 4 AND 5)</scope>
    <source>
        <tissue>Brain</tissue>
        <tissue>Uterus</tissue>
    </source>
</reference>
<reference key="4">
    <citation type="journal article" date="2006" name="Nature">
        <title>The DNA sequence, annotation and analysis of human chromosome 3.</title>
        <authorList>
            <person name="Muzny D.M."/>
            <person name="Scherer S.E."/>
            <person name="Kaul R."/>
            <person name="Wang J."/>
            <person name="Yu J."/>
            <person name="Sudbrak R."/>
            <person name="Buhay C.J."/>
            <person name="Chen R."/>
            <person name="Cree A."/>
            <person name="Ding Y."/>
            <person name="Dugan-Rocha S."/>
            <person name="Gill R."/>
            <person name="Gunaratne P."/>
            <person name="Harris R.A."/>
            <person name="Hawes A.C."/>
            <person name="Hernandez J."/>
            <person name="Hodgson A.V."/>
            <person name="Hume J."/>
            <person name="Jackson A."/>
            <person name="Khan Z.M."/>
            <person name="Kovar-Smith C."/>
            <person name="Lewis L.R."/>
            <person name="Lozado R.J."/>
            <person name="Metzker M.L."/>
            <person name="Milosavljevic A."/>
            <person name="Miner G.R."/>
            <person name="Morgan M.B."/>
            <person name="Nazareth L.V."/>
            <person name="Scott G."/>
            <person name="Sodergren E."/>
            <person name="Song X.-Z."/>
            <person name="Steffen D."/>
            <person name="Wei S."/>
            <person name="Wheeler D.A."/>
            <person name="Wright M.W."/>
            <person name="Worley K.C."/>
            <person name="Yuan Y."/>
            <person name="Zhang Z."/>
            <person name="Adams C.Q."/>
            <person name="Ansari-Lari M.A."/>
            <person name="Ayele M."/>
            <person name="Brown M.J."/>
            <person name="Chen G."/>
            <person name="Chen Z."/>
            <person name="Clendenning J."/>
            <person name="Clerc-Blankenburg K.P."/>
            <person name="Chen R."/>
            <person name="Chen Z."/>
            <person name="Davis C."/>
            <person name="Delgado O."/>
            <person name="Dinh H.H."/>
            <person name="Dong W."/>
            <person name="Draper H."/>
            <person name="Ernst S."/>
            <person name="Fu G."/>
            <person name="Gonzalez-Garay M.L."/>
            <person name="Garcia D.K."/>
            <person name="Gillett W."/>
            <person name="Gu J."/>
            <person name="Hao B."/>
            <person name="Haugen E."/>
            <person name="Havlak P."/>
            <person name="He X."/>
            <person name="Hennig S."/>
            <person name="Hu S."/>
            <person name="Huang W."/>
            <person name="Jackson L.R."/>
            <person name="Jacob L.S."/>
            <person name="Kelly S.H."/>
            <person name="Kube M."/>
            <person name="Levy R."/>
            <person name="Li Z."/>
            <person name="Liu B."/>
            <person name="Liu J."/>
            <person name="Liu W."/>
            <person name="Lu J."/>
            <person name="Maheshwari M."/>
            <person name="Nguyen B.-V."/>
            <person name="Okwuonu G.O."/>
            <person name="Palmeiri A."/>
            <person name="Pasternak S."/>
            <person name="Perez L.M."/>
            <person name="Phelps K.A."/>
            <person name="Plopper F.J."/>
            <person name="Qiang B."/>
            <person name="Raymond C."/>
            <person name="Rodriguez R."/>
            <person name="Saenphimmachak C."/>
            <person name="Santibanez J."/>
            <person name="Shen H."/>
            <person name="Shen Y."/>
            <person name="Subramanian S."/>
            <person name="Tabor P.E."/>
            <person name="Verduzco D."/>
            <person name="Waldron L."/>
            <person name="Wang J."/>
            <person name="Wang J."/>
            <person name="Wang Q."/>
            <person name="Williams G.A."/>
            <person name="Wong G.K.-S."/>
            <person name="Yao Z."/>
            <person name="Zhang J."/>
            <person name="Zhang X."/>
            <person name="Zhao G."/>
            <person name="Zhou J."/>
            <person name="Zhou Y."/>
            <person name="Nelson D."/>
            <person name="Lehrach H."/>
            <person name="Reinhardt R."/>
            <person name="Naylor S.L."/>
            <person name="Yang H."/>
            <person name="Olson M."/>
            <person name="Weinstock G."/>
            <person name="Gibbs R.A."/>
        </authorList>
    </citation>
    <scope>NUCLEOTIDE SEQUENCE [LARGE SCALE GENOMIC DNA]</scope>
</reference>
<reference key="5">
    <citation type="journal article" date="2004" name="Genome Res.">
        <title>The status, quality, and expansion of the NIH full-length cDNA project: the Mammalian Gene Collection (MGC).</title>
        <authorList>
            <consortium name="The MGC Project Team"/>
        </authorList>
    </citation>
    <scope>NUCLEOTIDE SEQUENCE [LARGE SCALE MRNA] (ISOFORMS 1; 2; 3 AND 6)</scope>
    <source>
        <tissue>Brain</tissue>
        <tissue>Lung</tissue>
        <tissue>Skin</tissue>
    </source>
</reference>
<reference key="6">
    <citation type="journal article" date="2007" name="BMC Genomics">
        <title>The full-ORF clone resource of the German cDNA consortium.</title>
        <authorList>
            <person name="Bechtel S."/>
            <person name="Rosenfelder H."/>
            <person name="Duda A."/>
            <person name="Schmidt C.P."/>
            <person name="Ernst U."/>
            <person name="Wellenreuther R."/>
            <person name="Mehrle A."/>
            <person name="Schuster C."/>
            <person name="Bahr A."/>
            <person name="Bloecker H."/>
            <person name="Heubner D."/>
            <person name="Hoerlein A."/>
            <person name="Michel G."/>
            <person name="Wedler H."/>
            <person name="Koehrer K."/>
            <person name="Ottenwaelder B."/>
            <person name="Poustka A."/>
            <person name="Wiemann S."/>
            <person name="Schupp I."/>
        </authorList>
    </citation>
    <scope>NUCLEOTIDE SEQUENCE [LARGE SCALE MRNA] OF 76-426 (ISOFORMS 1 AND 2)</scope>
    <source>
        <tissue>Uterus</tissue>
    </source>
</reference>
<reference key="7">
    <citation type="journal article" date="2001" name="J. Biol. Chem.">
        <title>Identification and characterization of a novel inositol hexakisphosphate kinase.</title>
        <authorList>
            <person name="Saiardi A."/>
            <person name="Nagata E."/>
            <person name="Luo H.R."/>
            <person name="Snowman A.M."/>
            <person name="Snyder S.H."/>
        </authorList>
    </citation>
    <scope>SUBCELLULAR LOCATION</scope>
</reference>
<reference key="8">
    <citation type="journal article" date="2019" name="J. Med. Chem.">
        <title>Inhibition of Inositol Polyphosphate Kinases by Quercetin and Related Flavonoids: A Structure-Activity Analysis.</title>
        <authorList>
            <person name="Gu C."/>
            <person name="Stashko M.A."/>
            <person name="Puhl-Rubio A.C."/>
            <person name="Chakraborty M."/>
            <person name="Chakraborty A."/>
            <person name="Frye S.V."/>
            <person name="Pearce K.H."/>
            <person name="Wang X."/>
            <person name="Shears S.B."/>
            <person name="Wang H."/>
        </authorList>
    </citation>
    <scope>FUNCTION</scope>
    <scope>CATALYTIC ACTIVITY</scope>
    <scope>ACTIVITY REGULATION</scope>
</reference>
<name>IP6K2_HUMAN</name>
<organism>
    <name type="scientific">Homo sapiens</name>
    <name type="common">Human</name>
    <dbReference type="NCBI Taxonomy" id="9606"/>
    <lineage>
        <taxon>Eukaryota</taxon>
        <taxon>Metazoa</taxon>
        <taxon>Chordata</taxon>
        <taxon>Craniata</taxon>
        <taxon>Vertebrata</taxon>
        <taxon>Euteleostomi</taxon>
        <taxon>Mammalia</taxon>
        <taxon>Eutheria</taxon>
        <taxon>Euarchontoglires</taxon>
        <taxon>Primates</taxon>
        <taxon>Haplorrhini</taxon>
        <taxon>Catarrhini</taxon>
        <taxon>Hominidae</taxon>
        <taxon>Homo</taxon>
    </lineage>
</organism>
<keyword id="KW-0025">Alternative splicing</keyword>
<keyword id="KW-0067">ATP-binding</keyword>
<keyword id="KW-0418">Kinase</keyword>
<keyword id="KW-0443">Lipid metabolism</keyword>
<keyword id="KW-0547">Nucleotide-binding</keyword>
<keyword id="KW-0539">Nucleus</keyword>
<keyword id="KW-1208">Phospholipid metabolism</keyword>
<keyword id="KW-1267">Proteomics identification</keyword>
<keyword id="KW-1185">Reference proteome</keyword>
<keyword id="KW-0808">Transferase</keyword>
<evidence type="ECO:0000250" key="1">
    <source>
        <dbReference type="UniProtKB" id="Q8NFU5"/>
    </source>
</evidence>
<evidence type="ECO:0000269" key="2">
    <source>
    </source>
</evidence>
<evidence type="ECO:0000269" key="3">
    <source>
    </source>
</evidence>
<evidence type="ECO:0000269" key="4">
    <source>
    </source>
</evidence>
<evidence type="ECO:0000303" key="5">
    <source>
    </source>
</evidence>
<evidence type="ECO:0000303" key="6">
    <source>
    </source>
</evidence>
<evidence type="ECO:0000303" key="7">
    <source>
    </source>
</evidence>
<evidence type="ECO:0000303" key="8">
    <source>
    </source>
</evidence>
<evidence type="ECO:0000303" key="9">
    <source>
    </source>
</evidence>
<evidence type="ECO:0000303" key="10">
    <source>
    </source>
</evidence>
<evidence type="ECO:0000305" key="11"/>
<accession>Q9UHH9</accession>
<accession>A8K3B1</accession>
<accession>B4E3G6</accession>
<accession>G8JLL6</accession>
<accession>Q6P0N8</accession>
<accession>Q9BSZ6</accession>
<accession>Q9BUW3</accession>
<accession>Q9H4P7</accession>
<accession>Q9NT63</accession>
<accession>Q9UFU6</accession>
<feature type="chain" id="PRO_0000066877" description="Inositol hexakisphosphate kinase 2">
    <location>
        <begin position="1"/>
        <end position="426"/>
    </location>
</feature>
<feature type="binding site" evidence="1">
    <location>
        <begin position="207"/>
        <end position="209"/>
    </location>
    <ligand>
        <name>ATP</name>
        <dbReference type="ChEBI" id="CHEBI:30616"/>
    </ligand>
</feature>
<feature type="binding site" evidence="1">
    <location>
        <position position="220"/>
    </location>
    <ligand>
        <name>ATP</name>
        <dbReference type="ChEBI" id="CHEBI:30616"/>
    </ligand>
</feature>
<feature type="binding site" evidence="1">
    <location>
        <position position="222"/>
    </location>
    <ligand>
        <name>substrate</name>
    </ligand>
</feature>
<feature type="binding site" evidence="1">
    <location>
        <begin position="236"/>
        <end position="243"/>
    </location>
    <ligand>
        <name>substrate</name>
    </ligand>
</feature>
<feature type="binding site" evidence="1">
    <location>
        <position position="383"/>
    </location>
    <ligand>
        <name>ATP</name>
        <dbReference type="ChEBI" id="CHEBI:30616"/>
    </ligand>
</feature>
<feature type="binding site" evidence="1">
    <location>
        <position position="386"/>
    </location>
    <ligand>
        <name>substrate</name>
    </ligand>
</feature>
<feature type="splice variant" id="VSP_042698" description="In isoform 4." evidence="7">
    <original>M</original>
    <variation>MSLNLPEASLLSRASWPEQAKEPRREGHTDKQQTEDVLAAGLRCLPHLPAICARRM</variation>
    <location>
        <position position="1"/>
    </location>
</feature>
<feature type="splice variant" id="VSP_042845" description="In isoform 5." evidence="7">
    <original>M</original>
    <variation>MNLCQSPFQEGCQSLLASWPEQAKEPRREGHTDKQQTEDVLAAGLRCLPHLPAICARRM</variation>
    <location>
        <position position="1"/>
    </location>
</feature>
<feature type="splice variant" id="VSP_042699" description="In isoform 4 and isoform 5." evidence="7">
    <original>VVSVRFEEDEDRNLCLIAYPLKGDHGIVDIVDNSDCEPKSKLLRWTTNKKHHVLETEKTPKD</original>
    <variation>KSQLLEGLPHWRGDVRDRGHGRPWQPSLEPSLPPTLCFPSLSSFSSSWPSAQHLTPSVFNPW</variation>
    <location>
        <begin position="69"/>
        <end position="130"/>
    </location>
</feature>
<feature type="splice variant" id="VSP_010925" description="In isoform 2." evidence="8 9">
    <original>VVSVRFEEDEDRNLCLIAYPLKGDHGIVD</original>
    <variation>QSQRPLVSWPSLPHFFPWSFPLWPQGSVA</variation>
    <location>
        <begin position="69"/>
        <end position="97"/>
    </location>
</feature>
<feature type="splice variant" id="VSP_045416" description="In isoform 6." evidence="8">
    <original>VVSVRFEEDEDRNLCLIAY</original>
    <variation>DISSHQHGGVFVGEWGSLL</variation>
    <location>
        <begin position="69"/>
        <end position="87"/>
    </location>
</feature>
<feature type="splice variant" id="VSP_010926" description="In isoform 3." evidence="8">
    <original>V</original>
    <variation>S</variation>
    <location>
        <position position="70"/>
    </location>
</feature>
<feature type="splice variant" id="VSP_010927" description="In isoform 3." evidence="8">
    <location>
        <begin position="71"/>
        <end position="426"/>
    </location>
</feature>
<feature type="splice variant" id="VSP_045417" description="In isoform 6." evidence="8">
    <location>
        <begin position="88"/>
        <end position="426"/>
    </location>
</feature>
<feature type="splice variant" id="VSP_010928" description="In isoform 2." evidence="8 9">
    <location>
        <begin position="98"/>
        <end position="426"/>
    </location>
</feature>
<feature type="splice variant" id="VSP_042700" description="In isoform 4 and isoform 5." evidence="7">
    <location>
        <begin position="131"/>
        <end position="426"/>
    </location>
</feature>
<feature type="sequence conflict" description="In Ref. 1; AAF15057." evidence="11" ref="1">
    <original>VD</original>
    <variation>AH</variation>
    <location>
        <begin position="99"/>
        <end position="100"/>
    </location>
</feature>
<feature type="sequence conflict" description="In Ref. 5; AAH65533." evidence="11" ref="5">
    <original>G</original>
    <variation>W</variation>
    <location>
        <position position="167"/>
    </location>
</feature>
<proteinExistence type="evidence at protein level"/>
<sequence length="426" mass="49186">MSPAFRAMDVEPRAKGVLLEPFVHQVGGHSCVLRFNETTLCKPLVPREHQFYETLPAEMRKFTPQYKGVVSVRFEEDEDRNLCLIAYPLKGDHGIVDIVDNSDCEPKSKLLRWTTNKKHHVLETEKTPKDWVRQHRKEEKMKSHKLEEEFEWLKKSEVLYYTVEKKGNISSQLKHYNPWSMKCHQQQLQRMKENAKHRNQYKFILLENLTSRYEVPCVLDLKMGTRQHGDDASEEKAANQIRKCQQSTSAVIGVRVCGMQVYQAGSGQLMFMNKYHGRKLSVQGFKEALFQFFHNGRYLRRELLGPVLKKLTELKAVLERQESYRFYSSSLLVIYDGKERPEVVLDSDAEDLEDLSEESADESAGAYAYKPIGASSVDVRMIDFAHTTCRLYGEDTVVHEGQDAGYIFGLQSLIDIVTEISEESGE</sequence>
<comment type="function">
    <text evidence="2 4">Converts inositol hexakisphosphate (InsP6) to diphosphoinositol pentakisphosphate (InsP7/PP-InsP5).</text>
</comment>
<comment type="catalytic activity">
    <reaction evidence="2 4">
        <text>1D-myo-inositol hexakisphosphate + ATP = 5-diphospho-1D-myo-inositol 1,2,3,4,6-pentakisphosphate + ADP</text>
        <dbReference type="Rhea" id="RHEA:12793"/>
        <dbReference type="ChEBI" id="CHEBI:30616"/>
        <dbReference type="ChEBI" id="CHEBI:58130"/>
        <dbReference type="ChEBI" id="CHEBI:58628"/>
        <dbReference type="ChEBI" id="CHEBI:456216"/>
    </reaction>
</comment>
<comment type="activity regulation">
    <text evidence="4">Inhibited by flavonoids, including myricetin, quercetin, luteolin, isorhamnetin, rhamnetin, kaempferol, diosmetin and apigenin.</text>
</comment>
<comment type="biophysicochemical properties">
    <kinetics>
        <KM evidence="2">3 uM for inositol hexakisphosphate</KM>
        <KM evidence="2">1 mM for ATP</KM>
        <Vmax evidence="2">2.0 umol/min/mg enzyme</Vmax>
    </kinetics>
</comment>
<comment type="pathway">
    <text evidence="2 4">Phospholipid metabolism; phosphatidylinositol metabolism.</text>
</comment>
<comment type="interaction">
    <interactant intactId="EBI-747509">
        <id>Q9UHH9</id>
    </interactant>
    <interactant intactId="EBI-296047">
        <id>P07900</id>
        <label>HSP90AA1</label>
    </interactant>
    <organismsDiffer>false</organismsDiffer>
    <experiments>2</experiments>
</comment>
<comment type="interaction">
    <interactant intactId="EBI-747509">
        <id>Q9UHH9</id>
    </interactant>
    <interactant intactId="EBI-2340947">
        <id>Q8N448</id>
        <label>LNX2</label>
    </interactant>
    <organismsDiffer>false</organismsDiffer>
    <experiments>3</experiments>
</comment>
<comment type="interaction">
    <interactant intactId="EBI-747509">
        <id>Q9UHH9</id>
    </interactant>
    <interactant intactId="EBI-748397">
        <id>P50222</id>
        <label>MEOX2</label>
    </interactant>
    <organismsDiffer>false</organismsDiffer>
    <experiments>3</experiments>
</comment>
<comment type="interaction">
    <interactant intactId="EBI-747509">
        <id>Q9UHH9</id>
    </interactant>
    <interactant intactId="EBI-21572584">
        <id>P07205</id>
        <label>PGK2</label>
    </interactant>
    <organismsDiffer>false</organismsDiffer>
    <experiments>2</experiments>
</comment>
<comment type="interaction">
    <interactant intactId="EBI-747509">
        <id>Q9UHH9</id>
    </interactant>
    <interactant intactId="EBI-741582">
        <id>O60568</id>
        <label>PLOD3</label>
    </interactant>
    <organismsDiffer>false</organismsDiffer>
    <experiments>3</experiments>
</comment>
<comment type="interaction">
    <interactant intactId="EBI-747509">
        <id>Q9UHH9</id>
    </interactant>
    <interactant intactId="EBI-740322">
        <id>Q93062</id>
        <label>RBPMS</label>
    </interactant>
    <organismsDiffer>false</organismsDiffer>
    <experiments>3</experiments>
</comment>
<comment type="interaction">
    <interactant intactId="EBI-747509">
        <id>Q9UHH9</id>
    </interactant>
    <interactant intactId="EBI-366083">
        <id>P04637</id>
        <label>TP53</label>
    </interactant>
    <organismsDiffer>false</organismsDiffer>
    <experiments>4</experiments>
</comment>
<comment type="interaction">
    <interactant intactId="EBI-747509">
        <id>Q9UHH9</id>
    </interactant>
    <interactant intactId="EBI-2515601">
        <id>Q8N680</id>
        <label>ZBTB2</label>
    </interactant>
    <organismsDiffer>false</organismsDiffer>
    <experiments>3</experiments>
</comment>
<comment type="subcellular location">
    <subcellularLocation>
        <location evidence="3">Nucleus</location>
    </subcellularLocation>
</comment>
<comment type="alternative products">
    <event type="alternative splicing"/>
    <isoform>
        <id>Q9UHH9-1</id>
        <name>1</name>
        <sequence type="displayed"/>
    </isoform>
    <isoform>
        <id>Q9UHH9-2</id>
        <name>2</name>
        <sequence type="described" ref="VSP_010925 VSP_010928"/>
    </isoform>
    <isoform>
        <id>Q9UHH9-3</id>
        <name>3</name>
        <sequence type="described" ref="VSP_010926 VSP_010927"/>
    </isoform>
    <isoform>
        <id>Q9UHH9-4</id>
        <name>4</name>
        <sequence type="described" ref="VSP_042698 VSP_042699 VSP_042700"/>
    </isoform>
    <isoform>
        <id>Q9UHH9-5</id>
        <name>5</name>
        <sequence type="described" ref="VSP_042845 VSP_042699 VSP_042700"/>
    </isoform>
    <isoform>
        <id>Q9UHH9-6</id>
        <name>6</name>
        <sequence type="described" ref="VSP_045416 VSP_045417"/>
    </isoform>
</comment>
<comment type="miscellaneous">
    <molecule>Isoform 3</molecule>
    <text evidence="11">May be produced at very low levels due to a premature stop codon in the mRNA, leading to nonsense-mediated mRNA decay.</text>
</comment>
<comment type="similarity">
    <text evidence="11">Belongs to the inositol phosphokinase (IPK) family.</text>
</comment>
<protein>
    <recommendedName>
        <fullName>Inositol hexakisphosphate kinase 2</fullName>
        <shortName evidence="5">InsP6 kinase 2</shortName>
        <shortName evidence="6">InsP6K2</shortName>
        <ecNumber evidence="2 4">2.7.4.-</ecNumber>
    </recommendedName>
    <alternativeName>
        <fullName>P(i)-uptake stimulator</fullName>
        <shortName evidence="5">PiUS</shortName>
    </alternativeName>
</protein>